<evidence type="ECO:0000250" key="1"/>
<evidence type="ECO:0000250" key="2">
    <source>
        <dbReference type="UniProtKB" id="Q12441"/>
    </source>
</evidence>
<evidence type="ECO:0000256" key="3">
    <source>
        <dbReference type="SAM" id="MobiDB-lite"/>
    </source>
</evidence>
<evidence type="ECO:0000269" key="4">
    <source>
    </source>
</evidence>
<keyword id="KW-0963">Cytoplasm</keyword>
<keyword id="KW-0597">Phosphoprotein</keyword>
<keyword id="KW-1185">Reference proteome</keyword>
<keyword id="KW-0688">Ribosomal frameshifting</keyword>
<keyword id="KW-0694">RNA-binding</keyword>
<keyword id="KW-0814">Transposable element</keyword>
<protein>
    <recommendedName>
        <fullName>Transposon Ty1-JR1 Gag polyprotein</fullName>
    </recommendedName>
    <alternativeName>
        <fullName>Gag-p49</fullName>
    </alternativeName>
    <alternativeName>
        <fullName>Transposon Ty1 protein A</fullName>
        <shortName>TY1A</shortName>
        <shortName>TYA</shortName>
    </alternativeName>
    <alternativeName>
        <fullName>p58</fullName>
    </alternativeName>
    <component>
        <recommendedName>
            <fullName>Capsid protein</fullName>
            <shortName>CA</shortName>
        </recommendedName>
        <alternativeName>
            <fullName>Gag-p45</fullName>
        </alternativeName>
        <alternativeName>
            <fullName>p54</fullName>
        </alternativeName>
    </component>
    <component>
        <recommendedName>
            <fullName>Gag-p4</fullName>
        </recommendedName>
    </component>
</protein>
<feature type="chain" id="PRO_0000203496" description="Transposon Ty1-JR1 Gag polyprotein">
    <location>
        <begin position="1"/>
        <end position="440"/>
    </location>
</feature>
<feature type="chain" id="PRO_0000279086" description="Capsid protein" evidence="1">
    <location>
        <begin position="1"/>
        <end position="401"/>
    </location>
</feature>
<feature type="peptide" id="PRO_0000279087" description="Gag-p4" evidence="1">
    <location>
        <begin position="402"/>
        <end position="440"/>
    </location>
</feature>
<feature type="region of interest" description="Disordered" evidence="3">
    <location>
        <begin position="1"/>
        <end position="93"/>
    </location>
</feature>
<feature type="region of interest" description="Disordered" evidence="3">
    <location>
        <begin position="126"/>
        <end position="173"/>
    </location>
</feature>
<feature type="region of interest" description="RNA-binding" evidence="1">
    <location>
        <begin position="299"/>
        <end position="401"/>
    </location>
</feature>
<feature type="region of interest" description="Disordered" evidence="3">
    <location>
        <begin position="352"/>
        <end position="440"/>
    </location>
</feature>
<feature type="compositionally biased region" description="Low complexity" evidence="3">
    <location>
        <begin position="1"/>
        <end position="16"/>
    </location>
</feature>
<feature type="compositionally biased region" description="Polar residues" evidence="3">
    <location>
        <begin position="48"/>
        <end position="60"/>
    </location>
</feature>
<feature type="compositionally biased region" description="Polar residues" evidence="3">
    <location>
        <begin position="127"/>
        <end position="152"/>
    </location>
</feature>
<feature type="compositionally biased region" description="Low complexity" evidence="3">
    <location>
        <begin position="153"/>
        <end position="165"/>
    </location>
</feature>
<feature type="compositionally biased region" description="Low complexity" evidence="3">
    <location>
        <begin position="402"/>
        <end position="418"/>
    </location>
</feature>
<feature type="compositionally biased region" description="Polar residues" evidence="3">
    <location>
        <begin position="419"/>
        <end position="428"/>
    </location>
</feature>
<feature type="compositionally biased region" description="Basic and acidic residues" evidence="3">
    <location>
        <begin position="429"/>
        <end position="440"/>
    </location>
</feature>
<feature type="site" description="Cleavage; by Ty1 protease" evidence="1">
    <location>
        <begin position="401"/>
        <end position="402"/>
    </location>
</feature>
<feature type="modified residue" description="Phosphoserine" evidence="2">
    <location>
        <position position="416"/>
    </location>
</feature>
<gene>
    <name type="primary">TY1A-JR1</name>
    <name type="synonym">YJRWTy1-1 GAG</name>
    <name type="ordered locus">YJR026W</name>
    <name type="ORF">J1555</name>
</gene>
<dbReference type="EMBL" id="X87297">
    <property type="protein sequence ID" value="CAA60721.1"/>
    <property type="molecule type" value="Genomic_DNA"/>
</dbReference>
<dbReference type="EMBL" id="Z49526">
    <property type="protein sequence ID" value="CAA89552.1"/>
    <property type="molecule type" value="Genomic_DNA"/>
</dbReference>
<dbReference type="EMBL" id="BK006943">
    <property type="protein sequence ID" value="DAA08816.1"/>
    <property type="molecule type" value="Genomic_DNA"/>
</dbReference>
<dbReference type="PIR" id="S57044">
    <property type="entry name" value="S57044"/>
</dbReference>
<dbReference type="RefSeq" id="NP_012561.3">
    <molecule id="P0CX74-1"/>
    <property type="nucleotide sequence ID" value="NM_001181684.3"/>
</dbReference>
<dbReference type="RefSeq" id="NP_013673.1">
    <molecule id="P0CX74-1"/>
    <property type="nucleotide sequence ID" value="NM_001182398.1"/>
</dbReference>
<dbReference type="RefSeq" id="NP_058172.1">
    <molecule id="P0CX74-1"/>
    <property type="nucleotide sequence ID" value="NM_001184407.1"/>
</dbReference>
<dbReference type="SMR" id="P0CX74"/>
<dbReference type="BioGRID" id="31496">
    <property type="interactions" value="4"/>
</dbReference>
<dbReference type="BioGRID" id="33779">
    <property type="interactions" value="8"/>
</dbReference>
<dbReference type="BioGRID" id="35130">
    <property type="interactions" value="5"/>
</dbReference>
<dbReference type="FunCoup" id="P0CX74">
    <property type="interactions" value="88"/>
</dbReference>
<dbReference type="GlyGen" id="P0CX74">
    <property type="glycosylation" value="2 sites"/>
</dbReference>
<dbReference type="PaxDb" id="4932-YJR026W"/>
<dbReference type="PeptideAtlas" id="P0CX74"/>
<dbReference type="TopDownProteomics" id="P0CX74-1">
    <molecule id="P0CX74-1"/>
</dbReference>
<dbReference type="GeneID" id="853483"/>
<dbReference type="KEGG" id="sce:YJR026W"/>
<dbReference type="KEGG" id="sce:YLR227W-A"/>
<dbReference type="KEGG" id="sce:YML040W"/>
<dbReference type="AGR" id="SGD:S000003787"/>
<dbReference type="SGD" id="S000003787">
    <property type="gene designation" value="YJR026W"/>
</dbReference>
<dbReference type="VEuPathDB" id="FungiDB:YJR026W"/>
<dbReference type="VEuPathDB" id="FungiDB:YLR227W-A"/>
<dbReference type="VEuPathDB" id="FungiDB:YML040W"/>
<dbReference type="eggNOG" id="KOG0017">
    <property type="taxonomic scope" value="Eukaryota"/>
</dbReference>
<dbReference type="HOGENOM" id="CLU_045291_1_0_1"/>
<dbReference type="InParanoid" id="P0CX74"/>
<dbReference type="OrthoDB" id="5423336at2759"/>
<dbReference type="Proteomes" id="UP000002311">
    <property type="component" value="Chromosome X"/>
</dbReference>
<dbReference type="RNAct" id="P0CX74">
    <property type="molecule type" value="protein"/>
</dbReference>
<dbReference type="GO" id="GO:0005737">
    <property type="term" value="C:cytoplasm"/>
    <property type="evidence" value="ECO:0007669"/>
    <property type="project" value="UniProtKB-SubCell"/>
</dbReference>
<dbReference type="GO" id="GO:0003723">
    <property type="term" value="F:RNA binding"/>
    <property type="evidence" value="ECO:0007669"/>
    <property type="project" value="UniProtKB-KW"/>
</dbReference>
<dbReference type="GO" id="GO:0075523">
    <property type="term" value="P:viral translational frameshifting"/>
    <property type="evidence" value="ECO:0007669"/>
    <property type="project" value="UniProtKB-KW"/>
</dbReference>
<dbReference type="InterPro" id="IPR015820">
    <property type="entry name" value="TYA"/>
</dbReference>
<dbReference type="Pfam" id="PF01021">
    <property type="entry name" value="TYA"/>
    <property type="match status" value="1"/>
</dbReference>
<organism>
    <name type="scientific">Saccharomyces cerevisiae (strain ATCC 204508 / S288c)</name>
    <name type="common">Baker's yeast</name>
    <dbReference type="NCBI Taxonomy" id="559292"/>
    <lineage>
        <taxon>Eukaryota</taxon>
        <taxon>Fungi</taxon>
        <taxon>Dikarya</taxon>
        <taxon>Ascomycota</taxon>
        <taxon>Saccharomycotina</taxon>
        <taxon>Saccharomycetes</taxon>
        <taxon>Saccharomycetales</taxon>
        <taxon>Saccharomycetaceae</taxon>
        <taxon>Saccharomyces</taxon>
    </lineage>
</organism>
<comment type="function">
    <text evidence="1">Capsid protein (CA) is the structural component of the virus-like particle (VLP), forming the shell that encapsulates the retrotransposons dimeric RNA genome. The particles are assembled from trimer-clustered units and there are holes in the capsid shells that allow for the diffusion of macromolecules. CA also has nucleocapsid-like chaperone activity, promoting primer tRNA(i)-Met annealing to the multipartite primer-binding site (PBS), dimerization of Ty1 RNA and initiation of reverse transcription (By similarity).</text>
</comment>
<comment type="subunit">
    <text evidence="1">Homotrimer.</text>
</comment>
<comment type="subcellular location">
    <subcellularLocation>
        <location evidence="1">Cytoplasm</location>
    </subcellularLocation>
</comment>
<comment type="alternative products">
    <event type="ribosomal frameshifting"/>
    <isoform>
        <id>P0CX74-1</id>
        <name>Transposon Ty1-JR1 Gag polyprotein</name>
        <sequence type="displayed"/>
    </isoform>
    <isoform>
        <id>P47098-1</id>
        <name>Transposon Ty1-JR1 Gag-Pol polyprotein</name>
        <sequence type="external"/>
    </isoform>
    <text evidence="1">The Gag-Pol polyprotein is generated by a +1 ribosomal frameshift. The ratio of Gag:Gag-Pol varies between 20:1 and 5:1 (By similarity).</text>
</comment>
<comment type="induction">
    <text evidence="4">Ty1-JR1 is a weakly expressed element. Induced under amino acid starvation conditions by GCN4.</text>
</comment>
<comment type="domain">
    <text evidence="1">The C-terminal RNA-binding region of CA is sufficient for all its nucleocapsid-like chaperone activities.</text>
</comment>
<comment type="miscellaneous">
    <text>Retrotransposons are mobile genetic entities that are able to replicate via an RNA intermediate and a reverse transcription step. In contrast to retroviruses, retrotransposons are non-infectious, lack an envelope and remain intracellular. Ty1 retrotransposons belong to the copia elements (pseudoviridae).</text>
</comment>
<comment type="miscellaneous">
    <molecule>Isoform Transposon Ty1-JR1 Gag polyprotein</molecule>
    <text>Produced by conventional translation.</text>
</comment>
<name>YJ11A_YEAST</name>
<sequence length="440" mass="48993">MESQQLSQHSHISHGSACASVTSKEVHTNQDPLDVSASKTEECEKASTKANSQQTTTPASSAVPENPHHASPQPASVPPPQNGPYPQQCMMTQNQANPSGWSFYGHPSMIPYTPYQMSPMYFPPGPQSQFPQYPSSVGTPLSTPSPESGNTFTDSSSADSDMTSTKKYVRPPPMLTSPNDFPNWVKTYIKFLQNSNLGGIIPTVNGKPVRQITDDELTFLYNTFQIFAPSQFLPTWVKDILSVDYTDIMKILSKSIEKMQSDTQEANDIVTLANLQYNGSTPADAFETKVTNIIDRLNNNGIHINNKVACQLIMRGLSGEYKFLRYTRHRHLNMTVAELFLDIHAIYEEQQGSRNSKPNYRRNLSDEKNDSRSYTNTTKPKVIARNPQKTNNSKSKTARAHNVSTSNNSPSTDNDSISKSTTEPIQLNNKHDLHLRPGTY</sequence>
<reference key="1">
    <citation type="journal article" date="1995" name="Yeast">
        <title>The sequence of 24.3 kb from chromosome X reveals five complete open reading frames, all of which correspond to new genes, and a tandem insertion of a Ty1 transposon.</title>
        <authorList>
            <person name="Zagulski M."/>
            <person name="Babinska B."/>
            <person name="Gromadka R."/>
            <person name="Migdalski A."/>
            <person name="Rytka J."/>
            <person name="Sulicka J."/>
            <person name="Herbert C.J."/>
        </authorList>
    </citation>
    <scope>NUCLEOTIDE SEQUENCE [GENOMIC DNA]</scope>
</reference>
<reference key="2">
    <citation type="journal article" date="1996" name="EMBO J.">
        <title>Complete nucleotide sequence of Saccharomyces cerevisiae chromosome X.</title>
        <authorList>
            <person name="Galibert F."/>
            <person name="Alexandraki D."/>
            <person name="Baur A."/>
            <person name="Boles E."/>
            <person name="Chalwatzis N."/>
            <person name="Chuat J.-C."/>
            <person name="Coster F."/>
            <person name="Cziepluch C."/>
            <person name="de Haan M."/>
            <person name="Domdey H."/>
            <person name="Durand P."/>
            <person name="Entian K.-D."/>
            <person name="Gatius M."/>
            <person name="Goffeau A."/>
            <person name="Grivell L.A."/>
            <person name="Hennemann A."/>
            <person name="Herbert C.J."/>
            <person name="Heumann K."/>
            <person name="Hilger F."/>
            <person name="Hollenberg C.P."/>
            <person name="Huang M.-E."/>
            <person name="Jacq C."/>
            <person name="Jauniaux J.-C."/>
            <person name="Katsoulou C."/>
            <person name="Kirchrath L."/>
            <person name="Kleine K."/>
            <person name="Kordes E."/>
            <person name="Koetter P."/>
            <person name="Liebl S."/>
            <person name="Louis E.J."/>
            <person name="Manus V."/>
            <person name="Mewes H.-W."/>
            <person name="Miosga T."/>
            <person name="Obermaier B."/>
            <person name="Perea J."/>
            <person name="Pohl T.M."/>
            <person name="Portetelle D."/>
            <person name="Pujol A."/>
            <person name="Purnelle B."/>
            <person name="Ramezani Rad M."/>
            <person name="Rasmussen S.W."/>
            <person name="Rose M."/>
            <person name="Rossau R."/>
            <person name="Schaaff-Gerstenschlaeger I."/>
            <person name="Smits P.H.M."/>
            <person name="Scarcez T."/>
            <person name="Soriano N."/>
            <person name="To Van D."/>
            <person name="Tzermia M."/>
            <person name="Van Broekhoven A."/>
            <person name="Vandenbol M."/>
            <person name="Wedler H."/>
            <person name="von Wettstein D."/>
            <person name="Wambutt R."/>
            <person name="Zagulski M."/>
            <person name="Zollner A."/>
            <person name="Karpfinger-Hartl L."/>
        </authorList>
    </citation>
    <scope>NUCLEOTIDE SEQUENCE [LARGE SCALE GENOMIC DNA]</scope>
    <source>
        <strain>ATCC 204508 / S288c</strain>
    </source>
</reference>
<reference key="3">
    <citation type="journal article" date="2014" name="G3 (Bethesda)">
        <title>The reference genome sequence of Saccharomyces cerevisiae: Then and now.</title>
        <authorList>
            <person name="Engel S.R."/>
            <person name="Dietrich F.S."/>
            <person name="Fisk D.G."/>
            <person name="Binkley G."/>
            <person name="Balakrishnan R."/>
            <person name="Costanzo M.C."/>
            <person name="Dwight S.S."/>
            <person name="Hitz B.C."/>
            <person name="Karra K."/>
            <person name="Nash R.S."/>
            <person name="Weng S."/>
            <person name="Wong E.D."/>
            <person name="Lloyd P."/>
            <person name="Skrzypek M.S."/>
            <person name="Miyasato S.R."/>
            <person name="Simison M."/>
            <person name="Cherry J.M."/>
        </authorList>
    </citation>
    <scope>GENOME REANNOTATION</scope>
    <source>
        <strain>ATCC 204508 / S288c</strain>
    </source>
</reference>
<reference key="4">
    <citation type="journal article" date="1998" name="Genome Res.">
        <title>Transposable elements and genome organization: a comprehensive survey of retrotransposons revealed by the complete Saccharomyces cerevisiae genome sequence.</title>
        <authorList>
            <person name="Kim J.M."/>
            <person name="Vanguri S."/>
            <person name="Boeke J.D."/>
            <person name="Gabriel A."/>
            <person name="Voytas D.F."/>
        </authorList>
    </citation>
    <scope>NOMENCLATURE</scope>
</reference>
<reference key="5">
    <citation type="journal article" date="2002" name="Mol. Cell. Biol.">
        <title>Differential effects of chromatin and Gcn4 on the 50-fold range of expression among individual yeast Ty1 retrotransposons.</title>
        <authorList>
            <person name="Morillon A."/>
            <person name="Benard L."/>
            <person name="Springer M."/>
            <person name="Lesage P."/>
        </authorList>
    </citation>
    <scope>INDUCTION</scope>
</reference>
<reference key="6">
    <citation type="journal article" date="2005" name="Cytogenet. Genome Res.">
        <title>Happy together: the life and times of Ty retrotransposons and their hosts.</title>
        <authorList>
            <person name="Lesage P."/>
            <person name="Todeschini A.L."/>
        </authorList>
    </citation>
    <scope>REVIEW</scope>
</reference>
<proteinExistence type="evidence at transcript level"/>
<accession>P0CX74</accession>
<accession>D6VWK0</accession>
<accession>P47097</accession>
<accession>Q66R50</accession>